<organism>
    <name type="scientific">Renibacterium salmoninarum (strain ATCC 33209 / DSM 20767 / JCM 11484 / NBRC 15589 / NCIMB 2235)</name>
    <dbReference type="NCBI Taxonomy" id="288705"/>
    <lineage>
        <taxon>Bacteria</taxon>
        <taxon>Bacillati</taxon>
        <taxon>Actinomycetota</taxon>
        <taxon>Actinomycetes</taxon>
        <taxon>Micrococcales</taxon>
        <taxon>Micrococcaceae</taxon>
        <taxon>Renibacterium</taxon>
    </lineage>
</organism>
<name>DXS_RENSM</name>
<dbReference type="EC" id="2.2.1.7" evidence="1"/>
<dbReference type="EMBL" id="CP000910">
    <property type="protein sequence ID" value="ABY24118.1"/>
    <property type="molecule type" value="Genomic_DNA"/>
</dbReference>
<dbReference type="RefSeq" id="WP_012245781.1">
    <property type="nucleotide sequence ID" value="NC_010168.1"/>
</dbReference>
<dbReference type="SMR" id="A9WRA9"/>
<dbReference type="STRING" id="288705.RSal33209_2392"/>
<dbReference type="KEGG" id="rsa:RSal33209_2392"/>
<dbReference type="eggNOG" id="COG1154">
    <property type="taxonomic scope" value="Bacteria"/>
</dbReference>
<dbReference type="HOGENOM" id="CLU_009227_1_4_11"/>
<dbReference type="UniPathway" id="UPA00064">
    <property type="reaction ID" value="UER00091"/>
</dbReference>
<dbReference type="Proteomes" id="UP000002007">
    <property type="component" value="Chromosome"/>
</dbReference>
<dbReference type="GO" id="GO:0005829">
    <property type="term" value="C:cytosol"/>
    <property type="evidence" value="ECO:0007669"/>
    <property type="project" value="TreeGrafter"/>
</dbReference>
<dbReference type="GO" id="GO:0008661">
    <property type="term" value="F:1-deoxy-D-xylulose-5-phosphate synthase activity"/>
    <property type="evidence" value="ECO:0007669"/>
    <property type="project" value="UniProtKB-UniRule"/>
</dbReference>
<dbReference type="GO" id="GO:0000287">
    <property type="term" value="F:magnesium ion binding"/>
    <property type="evidence" value="ECO:0007669"/>
    <property type="project" value="UniProtKB-UniRule"/>
</dbReference>
<dbReference type="GO" id="GO:0030976">
    <property type="term" value="F:thiamine pyrophosphate binding"/>
    <property type="evidence" value="ECO:0007669"/>
    <property type="project" value="UniProtKB-UniRule"/>
</dbReference>
<dbReference type="GO" id="GO:0052865">
    <property type="term" value="P:1-deoxy-D-xylulose 5-phosphate biosynthetic process"/>
    <property type="evidence" value="ECO:0007669"/>
    <property type="project" value="UniProtKB-UniPathway"/>
</dbReference>
<dbReference type="GO" id="GO:0019288">
    <property type="term" value="P:isopentenyl diphosphate biosynthetic process, methylerythritol 4-phosphate pathway"/>
    <property type="evidence" value="ECO:0007669"/>
    <property type="project" value="TreeGrafter"/>
</dbReference>
<dbReference type="GO" id="GO:0016114">
    <property type="term" value="P:terpenoid biosynthetic process"/>
    <property type="evidence" value="ECO:0007669"/>
    <property type="project" value="UniProtKB-UniRule"/>
</dbReference>
<dbReference type="GO" id="GO:0009228">
    <property type="term" value="P:thiamine biosynthetic process"/>
    <property type="evidence" value="ECO:0007669"/>
    <property type="project" value="UniProtKB-UniRule"/>
</dbReference>
<dbReference type="CDD" id="cd02007">
    <property type="entry name" value="TPP_DXS"/>
    <property type="match status" value="1"/>
</dbReference>
<dbReference type="CDD" id="cd07033">
    <property type="entry name" value="TPP_PYR_DXS_TK_like"/>
    <property type="match status" value="1"/>
</dbReference>
<dbReference type="FunFam" id="3.40.50.970:FF:000005">
    <property type="entry name" value="1-deoxy-D-xylulose-5-phosphate synthase"/>
    <property type="match status" value="1"/>
</dbReference>
<dbReference type="Gene3D" id="3.40.50.920">
    <property type="match status" value="1"/>
</dbReference>
<dbReference type="Gene3D" id="3.40.50.970">
    <property type="match status" value="2"/>
</dbReference>
<dbReference type="HAMAP" id="MF_00315">
    <property type="entry name" value="DXP_synth"/>
    <property type="match status" value="1"/>
</dbReference>
<dbReference type="InterPro" id="IPR005477">
    <property type="entry name" value="Dxylulose-5-P_synthase"/>
</dbReference>
<dbReference type="InterPro" id="IPR029061">
    <property type="entry name" value="THDP-binding"/>
</dbReference>
<dbReference type="InterPro" id="IPR009014">
    <property type="entry name" value="Transketo_C/PFOR_II"/>
</dbReference>
<dbReference type="InterPro" id="IPR005475">
    <property type="entry name" value="Transketolase-like_Pyr-bd"/>
</dbReference>
<dbReference type="InterPro" id="IPR020826">
    <property type="entry name" value="Transketolase_BS"/>
</dbReference>
<dbReference type="InterPro" id="IPR033248">
    <property type="entry name" value="Transketolase_C"/>
</dbReference>
<dbReference type="NCBIfam" id="TIGR00204">
    <property type="entry name" value="dxs"/>
    <property type="match status" value="1"/>
</dbReference>
<dbReference type="NCBIfam" id="NF003933">
    <property type="entry name" value="PRK05444.2-2"/>
    <property type="match status" value="1"/>
</dbReference>
<dbReference type="PANTHER" id="PTHR43322">
    <property type="entry name" value="1-D-DEOXYXYLULOSE 5-PHOSPHATE SYNTHASE-RELATED"/>
    <property type="match status" value="1"/>
</dbReference>
<dbReference type="PANTHER" id="PTHR43322:SF5">
    <property type="entry name" value="1-DEOXY-D-XYLULOSE-5-PHOSPHATE SYNTHASE, CHLOROPLASTIC"/>
    <property type="match status" value="1"/>
</dbReference>
<dbReference type="Pfam" id="PF13292">
    <property type="entry name" value="DXP_synthase_N"/>
    <property type="match status" value="1"/>
</dbReference>
<dbReference type="Pfam" id="PF02779">
    <property type="entry name" value="Transket_pyr"/>
    <property type="match status" value="1"/>
</dbReference>
<dbReference type="Pfam" id="PF02780">
    <property type="entry name" value="Transketolase_C"/>
    <property type="match status" value="1"/>
</dbReference>
<dbReference type="SMART" id="SM00861">
    <property type="entry name" value="Transket_pyr"/>
    <property type="match status" value="1"/>
</dbReference>
<dbReference type="SUPFAM" id="SSF52518">
    <property type="entry name" value="Thiamin diphosphate-binding fold (THDP-binding)"/>
    <property type="match status" value="1"/>
</dbReference>
<dbReference type="SUPFAM" id="SSF52922">
    <property type="entry name" value="TK C-terminal domain-like"/>
    <property type="match status" value="1"/>
</dbReference>
<dbReference type="PROSITE" id="PS00802">
    <property type="entry name" value="TRANSKETOLASE_2"/>
    <property type="match status" value="1"/>
</dbReference>
<protein>
    <recommendedName>
        <fullName evidence="1">1-deoxy-D-xylulose-5-phosphate synthase</fullName>
        <ecNumber evidence="1">2.2.1.7</ecNumber>
    </recommendedName>
    <alternativeName>
        <fullName evidence="1">1-deoxyxylulose-5-phosphate synthase</fullName>
        <shortName evidence="1">DXP synthase</shortName>
        <shortName evidence="1">DXPS</shortName>
    </alternativeName>
</protein>
<comment type="function">
    <text evidence="1">Catalyzes the acyloin condensation reaction between C atoms 2 and 3 of pyruvate and glyceraldehyde 3-phosphate to yield 1-deoxy-D-xylulose-5-phosphate (DXP).</text>
</comment>
<comment type="catalytic activity">
    <reaction evidence="1">
        <text>D-glyceraldehyde 3-phosphate + pyruvate + H(+) = 1-deoxy-D-xylulose 5-phosphate + CO2</text>
        <dbReference type="Rhea" id="RHEA:12605"/>
        <dbReference type="ChEBI" id="CHEBI:15361"/>
        <dbReference type="ChEBI" id="CHEBI:15378"/>
        <dbReference type="ChEBI" id="CHEBI:16526"/>
        <dbReference type="ChEBI" id="CHEBI:57792"/>
        <dbReference type="ChEBI" id="CHEBI:59776"/>
        <dbReference type="EC" id="2.2.1.7"/>
    </reaction>
</comment>
<comment type="cofactor">
    <cofactor evidence="1">
        <name>Mg(2+)</name>
        <dbReference type="ChEBI" id="CHEBI:18420"/>
    </cofactor>
    <text evidence="1">Binds 1 Mg(2+) ion per subunit.</text>
</comment>
<comment type="cofactor">
    <cofactor evidence="1">
        <name>thiamine diphosphate</name>
        <dbReference type="ChEBI" id="CHEBI:58937"/>
    </cofactor>
    <text evidence="1">Binds 1 thiamine pyrophosphate per subunit.</text>
</comment>
<comment type="pathway">
    <text evidence="1">Metabolic intermediate biosynthesis; 1-deoxy-D-xylulose 5-phosphate biosynthesis; 1-deoxy-D-xylulose 5-phosphate from D-glyceraldehyde 3-phosphate and pyruvate: step 1/1.</text>
</comment>
<comment type="subunit">
    <text evidence="1">Homodimer.</text>
</comment>
<comment type="similarity">
    <text evidence="1">Belongs to the transketolase family. DXPS subfamily.</text>
</comment>
<proteinExistence type="inferred from homology"/>
<accession>A9WRA9</accession>
<keyword id="KW-0414">Isoprene biosynthesis</keyword>
<keyword id="KW-0460">Magnesium</keyword>
<keyword id="KW-0479">Metal-binding</keyword>
<keyword id="KW-1185">Reference proteome</keyword>
<keyword id="KW-0784">Thiamine biosynthesis</keyword>
<keyword id="KW-0786">Thiamine pyrophosphate</keyword>
<keyword id="KW-0808">Transferase</keyword>
<sequence length="657" mass="70638">MGLLETIQHPADLARLSDEQLVQLAQEIRDFLISNVAQTGGHLGPNLCVVELTLAIHRVFDSPRDSIIFDTGHQSYVHKLVTGRQHFSTLRQQGGLSGYADRGESVHDVVESSHASSSLSWADGISRARVLNGEGDRYVVAVIGDGALTGGMTWEALNNIAADKDRRVVIVVNDNGRSYAPTVGGLADYLRSLRPAIDSLRTHKAYEGNLDWTKNKLQNGGFLGQLMYKSLHAAKKGVKDWWAPQGLFEDLGMKYIGPVDGHDQKALESAMQTAKNYAGPVIVHAMTDKGRGYAPARADEADQFHAVGVIDPETGLPLDPSTAQSWTSVFAEEIAEIADERDDIVGITAAMLIPVGLHRMAERHPQRVIDVGIAEQHALTTAAGMAFGGLHPVVAMYATFLNRGFDQLLMDVALHKAGVTVVLDRAGVTGPDGPSHHGMWDLSMLQIIPGLHLAAPRDATRLREELREAVAISDAPTVLRYSKGNVGAEVEAIERLDDGVDILARRPAGSTENDVLLVSVGAMSEMSLQVANLLGAQGISSTVVDPRWVLPVPQSIIELAAQHRIVIVIEDGVRAGGVGSRIRQEMRAAGVDTALNEVGLPVEFLAHGSRGQVLDRVGLTAQKVAHDVVAQVLGTKVPFARPLPNEQITHTGQFPTL</sequence>
<gene>
    <name evidence="1" type="primary">dxs</name>
    <name type="ordered locus">RSal33209_2392</name>
</gene>
<evidence type="ECO:0000255" key="1">
    <source>
        <dbReference type="HAMAP-Rule" id="MF_00315"/>
    </source>
</evidence>
<reference key="1">
    <citation type="journal article" date="2008" name="J. Bacteriol.">
        <title>Genome sequence of the fish pathogen Renibacterium salmoninarum suggests reductive evolution away from an environmental Arthrobacter ancestor.</title>
        <authorList>
            <person name="Wiens G.D."/>
            <person name="Rockey D.D."/>
            <person name="Wu Z."/>
            <person name="Chang J."/>
            <person name="Levy R."/>
            <person name="Crane S."/>
            <person name="Chen D.S."/>
            <person name="Capri G.R."/>
            <person name="Burnett J.R."/>
            <person name="Sudheesh P.S."/>
            <person name="Schipma M.J."/>
            <person name="Burd H."/>
            <person name="Bhattacharyya A."/>
            <person name="Rhodes L.D."/>
            <person name="Kaul R."/>
            <person name="Strom M.S."/>
        </authorList>
    </citation>
    <scope>NUCLEOTIDE SEQUENCE [LARGE SCALE GENOMIC DNA]</scope>
    <source>
        <strain>ATCC 33209 / DSM 20767 / JCM 11484 / NBRC 15589 / NCIMB 2235</strain>
    </source>
</reference>
<feature type="chain" id="PRO_1000079099" description="1-deoxy-D-xylulose-5-phosphate synthase">
    <location>
        <begin position="1"/>
        <end position="657"/>
    </location>
</feature>
<feature type="binding site" evidence="1">
    <location>
        <position position="73"/>
    </location>
    <ligand>
        <name>thiamine diphosphate</name>
        <dbReference type="ChEBI" id="CHEBI:58937"/>
    </ligand>
</feature>
<feature type="binding site" evidence="1">
    <location>
        <begin position="113"/>
        <end position="115"/>
    </location>
    <ligand>
        <name>thiamine diphosphate</name>
        <dbReference type="ChEBI" id="CHEBI:58937"/>
    </ligand>
</feature>
<feature type="binding site" evidence="1">
    <location>
        <position position="145"/>
    </location>
    <ligand>
        <name>Mg(2+)</name>
        <dbReference type="ChEBI" id="CHEBI:18420"/>
    </ligand>
</feature>
<feature type="binding site" evidence="1">
    <location>
        <begin position="146"/>
        <end position="147"/>
    </location>
    <ligand>
        <name>thiamine diphosphate</name>
        <dbReference type="ChEBI" id="CHEBI:58937"/>
    </ligand>
</feature>
<feature type="binding site" evidence="1">
    <location>
        <position position="175"/>
    </location>
    <ligand>
        <name>Mg(2+)</name>
        <dbReference type="ChEBI" id="CHEBI:18420"/>
    </ligand>
</feature>
<feature type="binding site" evidence="1">
    <location>
        <position position="175"/>
    </location>
    <ligand>
        <name>thiamine diphosphate</name>
        <dbReference type="ChEBI" id="CHEBI:58937"/>
    </ligand>
</feature>
<feature type="binding site" evidence="1">
    <location>
        <position position="293"/>
    </location>
    <ligand>
        <name>thiamine diphosphate</name>
        <dbReference type="ChEBI" id="CHEBI:58937"/>
    </ligand>
</feature>
<feature type="binding site" evidence="1">
    <location>
        <position position="375"/>
    </location>
    <ligand>
        <name>thiamine diphosphate</name>
        <dbReference type="ChEBI" id="CHEBI:58937"/>
    </ligand>
</feature>